<protein>
    <recommendedName>
        <fullName evidence="1">RNA-binding protein Hfq</fullName>
    </recommendedName>
</protein>
<organism>
    <name type="scientific">Oceanobacillus iheyensis (strain DSM 14371 / CIP 107618 / JCM 11309 / KCTC 3954 / HTE831)</name>
    <dbReference type="NCBI Taxonomy" id="221109"/>
    <lineage>
        <taxon>Bacteria</taxon>
        <taxon>Bacillati</taxon>
        <taxon>Bacillota</taxon>
        <taxon>Bacilli</taxon>
        <taxon>Bacillales</taxon>
        <taxon>Bacillaceae</taxon>
        <taxon>Oceanobacillus</taxon>
    </lineage>
</organism>
<dbReference type="EMBL" id="BA000028">
    <property type="protein sequence ID" value="BAC13591.1"/>
    <property type="molecule type" value="Genomic_DNA"/>
</dbReference>
<dbReference type="RefSeq" id="WP_011066035.1">
    <property type="nucleotide sequence ID" value="NC_004193.1"/>
</dbReference>
<dbReference type="SMR" id="Q8EQQ9"/>
<dbReference type="STRING" id="221109.gene:10733875"/>
<dbReference type="KEGG" id="oih:OB1635"/>
<dbReference type="eggNOG" id="COG1923">
    <property type="taxonomic scope" value="Bacteria"/>
</dbReference>
<dbReference type="HOGENOM" id="CLU_113688_3_0_9"/>
<dbReference type="OrthoDB" id="9799751at2"/>
<dbReference type="PhylomeDB" id="Q8EQQ9"/>
<dbReference type="Proteomes" id="UP000000822">
    <property type="component" value="Chromosome"/>
</dbReference>
<dbReference type="GO" id="GO:0005829">
    <property type="term" value="C:cytosol"/>
    <property type="evidence" value="ECO:0007669"/>
    <property type="project" value="TreeGrafter"/>
</dbReference>
<dbReference type="GO" id="GO:0003723">
    <property type="term" value="F:RNA binding"/>
    <property type="evidence" value="ECO:0007669"/>
    <property type="project" value="UniProtKB-UniRule"/>
</dbReference>
<dbReference type="GO" id="GO:0006355">
    <property type="term" value="P:regulation of DNA-templated transcription"/>
    <property type="evidence" value="ECO:0007669"/>
    <property type="project" value="InterPro"/>
</dbReference>
<dbReference type="GO" id="GO:0043487">
    <property type="term" value="P:regulation of RNA stability"/>
    <property type="evidence" value="ECO:0007669"/>
    <property type="project" value="TreeGrafter"/>
</dbReference>
<dbReference type="GO" id="GO:0045974">
    <property type="term" value="P:regulation of translation, ncRNA-mediated"/>
    <property type="evidence" value="ECO:0007669"/>
    <property type="project" value="TreeGrafter"/>
</dbReference>
<dbReference type="CDD" id="cd01716">
    <property type="entry name" value="Hfq"/>
    <property type="match status" value="1"/>
</dbReference>
<dbReference type="FunFam" id="2.30.30.100:FF:000012">
    <property type="entry name" value="RNA-binding protein Hfq"/>
    <property type="match status" value="1"/>
</dbReference>
<dbReference type="Gene3D" id="2.30.30.100">
    <property type="match status" value="1"/>
</dbReference>
<dbReference type="HAMAP" id="MF_00436">
    <property type="entry name" value="Hfq"/>
    <property type="match status" value="1"/>
</dbReference>
<dbReference type="InterPro" id="IPR005001">
    <property type="entry name" value="Hfq"/>
</dbReference>
<dbReference type="InterPro" id="IPR010920">
    <property type="entry name" value="LSM_dom_sf"/>
</dbReference>
<dbReference type="InterPro" id="IPR047575">
    <property type="entry name" value="Sm"/>
</dbReference>
<dbReference type="NCBIfam" id="TIGR02383">
    <property type="entry name" value="Hfq"/>
    <property type="match status" value="1"/>
</dbReference>
<dbReference type="NCBIfam" id="NF001602">
    <property type="entry name" value="PRK00395.1"/>
    <property type="match status" value="1"/>
</dbReference>
<dbReference type="PANTHER" id="PTHR34772">
    <property type="entry name" value="RNA-BINDING PROTEIN HFQ"/>
    <property type="match status" value="1"/>
</dbReference>
<dbReference type="PANTHER" id="PTHR34772:SF1">
    <property type="entry name" value="RNA-BINDING PROTEIN HFQ"/>
    <property type="match status" value="1"/>
</dbReference>
<dbReference type="Pfam" id="PF17209">
    <property type="entry name" value="Hfq"/>
    <property type="match status" value="1"/>
</dbReference>
<dbReference type="SUPFAM" id="SSF50182">
    <property type="entry name" value="Sm-like ribonucleoproteins"/>
    <property type="match status" value="1"/>
</dbReference>
<dbReference type="PROSITE" id="PS52002">
    <property type="entry name" value="SM"/>
    <property type="match status" value="1"/>
</dbReference>
<comment type="function">
    <text evidence="1">RNA chaperone that binds small regulatory RNA (sRNAs) and mRNAs to facilitate mRNA translational regulation in response to envelope stress, environmental stress and changes in metabolite concentrations. Also binds with high specificity to tRNAs.</text>
</comment>
<comment type="subunit">
    <text evidence="1">Homohexamer.</text>
</comment>
<comment type="similarity">
    <text evidence="1">Belongs to the Hfq family.</text>
</comment>
<reference key="1">
    <citation type="journal article" date="2002" name="Nucleic Acids Res.">
        <title>Genome sequence of Oceanobacillus iheyensis isolated from the Iheya Ridge and its unexpected adaptive capabilities to extreme environments.</title>
        <authorList>
            <person name="Takami H."/>
            <person name="Takaki Y."/>
            <person name="Uchiyama I."/>
        </authorList>
    </citation>
    <scope>NUCLEOTIDE SEQUENCE [LARGE SCALE GENOMIC DNA]</scope>
    <source>
        <strain>DSM 14371 / CIP 107618 / JCM 11309 / KCTC 3954 / HTE831</strain>
    </source>
</reference>
<keyword id="KW-1185">Reference proteome</keyword>
<keyword id="KW-0694">RNA-binding</keyword>
<keyword id="KW-0346">Stress response</keyword>
<evidence type="ECO:0000255" key="1">
    <source>
        <dbReference type="HAMAP-Rule" id="MF_00436"/>
    </source>
</evidence>
<evidence type="ECO:0000255" key="2">
    <source>
        <dbReference type="PROSITE-ProRule" id="PRU01346"/>
    </source>
</evidence>
<feature type="chain" id="PRO_0000095654" description="RNA-binding protein Hfq">
    <location>
        <begin position="1"/>
        <end position="74"/>
    </location>
</feature>
<feature type="domain" description="Sm" evidence="2">
    <location>
        <begin position="9"/>
        <end position="69"/>
    </location>
</feature>
<sequence>MAQSVNIQDQYLNQLRKNHISVTVFLTNGFQLRGLVKAFDNFTVLLETDGKQQLIFKHAISTFSPVKNVSLDKE</sequence>
<gene>
    <name evidence="1" type="primary">hfq</name>
    <name type="ordered locus">OB1635</name>
</gene>
<proteinExistence type="inferred from homology"/>
<name>HFQ_OCEIH</name>
<accession>Q8EQQ9</accession>